<gene>
    <name evidence="10" type="primary">Rab25</name>
</gene>
<comment type="function">
    <text evidence="2 3 4 5 8">The small GTPases Rab are key regulators of intracellular membrane trafficking, from the formation of transport vesicles to their fusion with membranes. Rabs cycle between an inactive GDP-bound form and an active GTP-bound form that is able to recruit to membranes different set of downstream effectors directly responsible for vesicle formation, movement, tethering and fusion (By similarity). RAB25 regulates epithelial cell differentiation, proliferation and survival, thereby playing key roles in tumorigenesis. Promotes invasive migration of cells in which it functions to localize and maintain integrin alpha-V/beta-1 at the tips of extending pseudopodia (By similarity). Involved in the regulation of epithelial morphogenesis through the control of CLDN4 expression and localization at tight junctions (PubMed:22696678). May selectively regulate the apical recycling pathway (By similarity). Together with MYO5B regulates transcytosis (By similarity).</text>
</comment>
<comment type="catalytic activity">
    <reaction evidence="3">
        <text>GTP + H2O = GDP + phosphate + H(+)</text>
        <dbReference type="Rhea" id="RHEA:19669"/>
        <dbReference type="ChEBI" id="CHEBI:15377"/>
        <dbReference type="ChEBI" id="CHEBI:15378"/>
        <dbReference type="ChEBI" id="CHEBI:37565"/>
        <dbReference type="ChEBI" id="CHEBI:43474"/>
        <dbReference type="ChEBI" id="CHEBI:58189"/>
        <dbReference type="EC" id="3.6.5.2"/>
    </reaction>
    <physiologicalReaction direction="left-to-right" evidence="3">
        <dbReference type="Rhea" id="RHEA:19670"/>
    </physiologicalReaction>
</comment>
<comment type="cofactor">
    <cofactor evidence="4">
        <name>Mg(2+)</name>
        <dbReference type="ChEBI" id="CHEBI:18420"/>
    </cofactor>
</comment>
<comment type="activity regulation">
    <text evidence="4">Regulated by guanine nucleotide exchange factors (GEFs) which promote the exchange of bound GDP for free GTP. Regulated by GTPase activating proteins (GAPs) which increase the GTP hydrolysis activity. Inhibited by GDP dissociation inhibitors (GDIs) which prevent Rab-GDP dissociation.</text>
</comment>
<comment type="subunit">
    <text evidence="4">Interacts (GTP-bound form) with RAB11FIP1, RAB11FIP2, RAB11FIP3 and RAB11FIP4. Interacts (via the hypervariable C-terminal region) with ITGB1 (via the cytoplasmic region); the interaction is GTP-dependent. Interacts with ITGAV. Associates with the integrin alpha-V/beta-1 heterodimer. Interacts with VPS33B.</text>
</comment>
<comment type="subcellular location">
    <subcellularLocation>
        <location evidence="9">Cell membrane</location>
        <topology evidence="9">Lipid-anchor</topology>
        <orientation evidence="9">Cytoplasmic side</orientation>
    </subcellularLocation>
    <subcellularLocation>
        <location evidence="4">Cell projection</location>
        <location evidence="4">Pseudopodium membrane</location>
    </subcellularLocation>
    <subcellularLocation>
        <location evidence="4">Cytoplasmic vesicle</location>
    </subcellularLocation>
    <text evidence="3 4">Colocalizes with integrin alpha-V/beta-1 in vesicles at the pseudopodial tips. Colocalizes with RAB11A in subapical vesicles (By similarity).</text>
</comment>
<comment type="domain">
    <text evidence="6">Switch 1, switch 2 and the interswitch regions are characteristic of Rab GTPases and mediate the interactions with Rab downstream effectors. The switch regions undergo conformational changes upon nucleotide binding which drive interaction with specific sets of effector proteins, with most effectors only binding to GTP-bound Rab.</text>
</comment>
<comment type="similarity">
    <text evidence="9">Belongs to the small GTPase superfamily. Rab family.</text>
</comment>
<accession>Q9WTL2</accession>
<accession>Q9D1P3</accession>
<evidence type="ECO:0000250" key="1"/>
<evidence type="ECO:0000250" key="2">
    <source>
        <dbReference type="UniProtKB" id="E2RQ15"/>
    </source>
</evidence>
<evidence type="ECO:0000250" key="3">
    <source>
        <dbReference type="UniProtKB" id="P46629"/>
    </source>
</evidence>
<evidence type="ECO:0000250" key="4">
    <source>
        <dbReference type="UniProtKB" id="P57735"/>
    </source>
</evidence>
<evidence type="ECO:0000250" key="5">
    <source>
        <dbReference type="UniProtKB" id="P61106"/>
    </source>
</evidence>
<evidence type="ECO:0000250" key="6">
    <source>
        <dbReference type="UniProtKB" id="P62820"/>
    </source>
</evidence>
<evidence type="ECO:0000255" key="7"/>
<evidence type="ECO:0000269" key="8">
    <source>
    </source>
</evidence>
<evidence type="ECO:0000305" key="9"/>
<evidence type="ECO:0000312" key="10">
    <source>
        <dbReference type="MGI" id="MGI:1858203"/>
    </source>
</evidence>
<reference key="1">
    <citation type="journal article" date="2000" name="Biochem. Biophys. Res. Commun.">
        <title>Genomic structure of murine rab11 family members.</title>
        <authorList>
            <person name="Bhartur S.G."/>
            <person name="Calhoun B.C."/>
            <person name="Woodrum J."/>
            <person name="Kurkjian J."/>
            <person name="Iyer S."/>
            <person name="Lai F."/>
            <person name="Goldenring J.R."/>
        </authorList>
    </citation>
    <scope>NUCLEOTIDE SEQUENCE [GENOMIC DNA / MRNA]</scope>
</reference>
<reference key="2">
    <citation type="journal article" date="2005" name="Science">
        <title>The transcriptional landscape of the mammalian genome.</title>
        <authorList>
            <person name="Carninci P."/>
            <person name="Kasukawa T."/>
            <person name="Katayama S."/>
            <person name="Gough J."/>
            <person name="Frith M.C."/>
            <person name="Maeda N."/>
            <person name="Oyama R."/>
            <person name="Ravasi T."/>
            <person name="Lenhard B."/>
            <person name="Wells C."/>
            <person name="Kodzius R."/>
            <person name="Shimokawa K."/>
            <person name="Bajic V.B."/>
            <person name="Brenner S.E."/>
            <person name="Batalov S."/>
            <person name="Forrest A.R."/>
            <person name="Zavolan M."/>
            <person name="Davis M.J."/>
            <person name="Wilming L.G."/>
            <person name="Aidinis V."/>
            <person name="Allen J.E."/>
            <person name="Ambesi-Impiombato A."/>
            <person name="Apweiler R."/>
            <person name="Aturaliya R.N."/>
            <person name="Bailey T.L."/>
            <person name="Bansal M."/>
            <person name="Baxter L."/>
            <person name="Beisel K.W."/>
            <person name="Bersano T."/>
            <person name="Bono H."/>
            <person name="Chalk A.M."/>
            <person name="Chiu K.P."/>
            <person name="Choudhary V."/>
            <person name="Christoffels A."/>
            <person name="Clutterbuck D.R."/>
            <person name="Crowe M.L."/>
            <person name="Dalla E."/>
            <person name="Dalrymple B.P."/>
            <person name="de Bono B."/>
            <person name="Della Gatta G."/>
            <person name="di Bernardo D."/>
            <person name="Down T."/>
            <person name="Engstrom P."/>
            <person name="Fagiolini M."/>
            <person name="Faulkner G."/>
            <person name="Fletcher C.F."/>
            <person name="Fukushima T."/>
            <person name="Furuno M."/>
            <person name="Futaki S."/>
            <person name="Gariboldi M."/>
            <person name="Georgii-Hemming P."/>
            <person name="Gingeras T.R."/>
            <person name="Gojobori T."/>
            <person name="Green R.E."/>
            <person name="Gustincich S."/>
            <person name="Harbers M."/>
            <person name="Hayashi Y."/>
            <person name="Hensch T.K."/>
            <person name="Hirokawa N."/>
            <person name="Hill D."/>
            <person name="Huminiecki L."/>
            <person name="Iacono M."/>
            <person name="Ikeo K."/>
            <person name="Iwama A."/>
            <person name="Ishikawa T."/>
            <person name="Jakt M."/>
            <person name="Kanapin A."/>
            <person name="Katoh M."/>
            <person name="Kawasawa Y."/>
            <person name="Kelso J."/>
            <person name="Kitamura H."/>
            <person name="Kitano H."/>
            <person name="Kollias G."/>
            <person name="Krishnan S.P."/>
            <person name="Kruger A."/>
            <person name="Kummerfeld S.K."/>
            <person name="Kurochkin I.V."/>
            <person name="Lareau L.F."/>
            <person name="Lazarevic D."/>
            <person name="Lipovich L."/>
            <person name="Liu J."/>
            <person name="Liuni S."/>
            <person name="McWilliam S."/>
            <person name="Madan Babu M."/>
            <person name="Madera M."/>
            <person name="Marchionni L."/>
            <person name="Matsuda H."/>
            <person name="Matsuzawa S."/>
            <person name="Miki H."/>
            <person name="Mignone F."/>
            <person name="Miyake S."/>
            <person name="Morris K."/>
            <person name="Mottagui-Tabar S."/>
            <person name="Mulder N."/>
            <person name="Nakano N."/>
            <person name="Nakauchi H."/>
            <person name="Ng P."/>
            <person name="Nilsson R."/>
            <person name="Nishiguchi S."/>
            <person name="Nishikawa S."/>
            <person name="Nori F."/>
            <person name="Ohara O."/>
            <person name="Okazaki Y."/>
            <person name="Orlando V."/>
            <person name="Pang K.C."/>
            <person name="Pavan W.J."/>
            <person name="Pavesi G."/>
            <person name="Pesole G."/>
            <person name="Petrovsky N."/>
            <person name="Piazza S."/>
            <person name="Reed J."/>
            <person name="Reid J.F."/>
            <person name="Ring B.Z."/>
            <person name="Ringwald M."/>
            <person name="Rost B."/>
            <person name="Ruan Y."/>
            <person name="Salzberg S.L."/>
            <person name="Sandelin A."/>
            <person name="Schneider C."/>
            <person name="Schoenbach C."/>
            <person name="Sekiguchi K."/>
            <person name="Semple C.A."/>
            <person name="Seno S."/>
            <person name="Sessa L."/>
            <person name="Sheng Y."/>
            <person name="Shibata Y."/>
            <person name="Shimada H."/>
            <person name="Shimada K."/>
            <person name="Silva D."/>
            <person name="Sinclair B."/>
            <person name="Sperling S."/>
            <person name="Stupka E."/>
            <person name="Sugiura K."/>
            <person name="Sultana R."/>
            <person name="Takenaka Y."/>
            <person name="Taki K."/>
            <person name="Tammoja K."/>
            <person name="Tan S.L."/>
            <person name="Tang S."/>
            <person name="Taylor M.S."/>
            <person name="Tegner J."/>
            <person name="Teichmann S.A."/>
            <person name="Ueda H.R."/>
            <person name="van Nimwegen E."/>
            <person name="Verardo R."/>
            <person name="Wei C.L."/>
            <person name="Yagi K."/>
            <person name="Yamanishi H."/>
            <person name="Zabarovsky E."/>
            <person name="Zhu S."/>
            <person name="Zimmer A."/>
            <person name="Hide W."/>
            <person name="Bult C."/>
            <person name="Grimmond S.M."/>
            <person name="Teasdale R.D."/>
            <person name="Liu E.T."/>
            <person name="Brusic V."/>
            <person name="Quackenbush J."/>
            <person name="Wahlestedt C."/>
            <person name="Mattick J.S."/>
            <person name="Hume D.A."/>
            <person name="Kai C."/>
            <person name="Sasaki D."/>
            <person name="Tomaru Y."/>
            <person name="Fukuda S."/>
            <person name="Kanamori-Katayama M."/>
            <person name="Suzuki M."/>
            <person name="Aoki J."/>
            <person name="Arakawa T."/>
            <person name="Iida J."/>
            <person name="Imamura K."/>
            <person name="Itoh M."/>
            <person name="Kato T."/>
            <person name="Kawaji H."/>
            <person name="Kawagashira N."/>
            <person name="Kawashima T."/>
            <person name="Kojima M."/>
            <person name="Kondo S."/>
            <person name="Konno H."/>
            <person name="Nakano K."/>
            <person name="Ninomiya N."/>
            <person name="Nishio T."/>
            <person name="Okada M."/>
            <person name="Plessy C."/>
            <person name="Shibata K."/>
            <person name="Shiraki T."/>
            <person name="Suzuki S."/>
            <person name="Tagami M."/>
            <person name="Waki K."/>
            <person name="Watahiki A."/>
            <person name="Okamura-Oho Y."/>
            <person name="Suzuki H."/>
            <person name="Kawai J."/>
            <person name="Hayashizaki Y."/>
        </authorList>
    </citation>
    <scope>NUCLEOTIDE SEQUENCE [LARGE SCALE MRNA]</scope>
    <source>
        <strain>C57BL/6J</strain>
        <tissue>Embryo</tissue>
    </source>
</reference>
<reference key="3">
    <citation type="journal article" date="2004" name="Genome Res.">
        <title>The status, quality, and expansion of the NIH full-length cDNA project: the Mammalian Gene Collection (MGC).</title>
        <authorList>
            <consortium name="The MGC Project Team"/>
        </authorList>
    </citation>
    <scope>NUCLEOTIDE SEQUENCE [LARGE SCALE MRNA]</scope>
</reference>
<reference key="4">
    <citation type="submission" date="2007-04" db="UniProtKB">
        <authorList>
            <person name="Lubec G."/>
            <person name="Kang S.U."/>
        </authorList>
    </citation>
    <scope>PROTEIN SEQUENCE OF 15-25 AND 76-83</scope>
    <scope>IDENTIFICATION BY MASS SPECTROMETRY</scope>
    <source>
        <strain>C57BL/6J</strain>
        <tissue>Brain</tissue>
    </source>
</reference>
<reference key="5">
    <citation type="journal article" date="2010" name="Cell">
        <title>A tissue-specific atlas of mouse protein phosphorylation and expression.</title>
        <authorList>
            <person name="Huttlin E.L."/>
            <person name="Jedrychowski M.P."/>
            <person name="Elias J.E."/>
            <person name="Goswami T."/>
            <person name="Rad R."/>
            <person name="Beausoleil S.A."/>
            <person name="Villen J."/>
            <person name="Haas W."/>
            <person name="Sowa M.E."/>
            <person name="Gygi S.P."/>
        </authorList>
    </citation>
    <scope>IDENTIFICATION BY MASS SPECTROMETRY [LARGE SCALE ANALYSIS]</scope>
    <source>
        <tissue>Kidney</tissue>
        <tissue>Lung</tissue>
        <tissue>Pancreas</tissue>
    </source>
</reference>
<reference key="6">
    <citation type="journal article" date="2012" name="Mol. Biol. Cell">
        <title>Grainyhead-like 2 regulates epithelial morphogenesis by establishing functional tight junctions through the organization of a molecular network among claudin3, claudin4, and Rab25.</title>
        <authorList>
            <person name="Senga K."/>
            <person name="Mostov K.E."/>
            <person name="Mitaka T."/>
            <person name="Miyajima A."/>
            <person name="Tanimizu N."/>
        </authorList>
    </citation>
    <scope>FUNCTION</scope>
</reference>
<organism>
    <name type="scientific">Mus musculus</name>
    <name type="common">Mouse</name>
    <dbReference type="NCBI Taxonomy" id="10090"/>
    <lineage>
        <taxon>Eukaryota</taxon>
        <taxon>Metazoa</taxon>
        <taxon>Chordata</taxon>
        <taxon>Craniata</taxon>
        <taxon>Vertebrata</taxon>
        <taxon>Euteleostomi</taxon>
        <taxon>Mammalia</taxon>
        <taxon>Eutheria</taxon>
        <taxon>Euarchontoglires</taxon>
        <taxon>Glires</taxon>
        <taxon>Rodentia</taxon>
        <taxon>Myomorpha</taxon>
        <taxon>Muroidea</taxon>
        <taxon>Muridae</taxon>
        <taxon>Murinae</taxon>
        <taxon>Mus</taxon>
        <taxon>Mus</taxon>
    </lineage>
</organism>
<keyword id="KW-1003">Cell membrane</keyword>
<keyword id="KW-0966">Cell projection</keyword>
<keyword id="KW-0968">Cytoplasmic vesicle</keyword>
<keyword id="KW-0903">Direct protein sequencing</keyword>
<keyword id="KW-0342">GTP-binding</keyword>
<keyword id="KW-0378">Hydrolase</keyword>
<keyword id="KW-0449">Lipoprotein</keyword>
<keyword id="KW-0460">Magnesium</keyword>
<keyword id="KW-0472">Membrane</keyword>
<keyword id="KW-0479">Metal-binding</keyword>
<keyword id="KW-0488">Methylation</keyword>
<keyword id="KW-0547">Nucleotide-binding</keyword>
<keyword id="KW-0636">Prenylation</keyword>
<keyword id="KW-0653">Protein transport</keyword>
<keyword id="KW-1185">Reference proteome</keyword>
<keyword id="KW-0813">Transport</keyword>
<dbReference type="EC" id="3.6.5.2" evidence="3"/>
<dbReference type="EMBL" id="AF119675">
    <property type="protein sequence ID" value="AAD39911.1"/>
    <property type="molecule type" value="mRNA"/>
</dbReference>
<dbReference type="EMBL" id="AF119676">
    <property type="protein sequence ID" value="AAD39912.1"/>
    <property type="molecule type" value="Genomic_DNA"/>
</dbReference>
<dbReference type="EMBL" id="AK003260">
    <property type="protein sequence ID" value="BAB22676.1"/>
    <property type="molecule type" value="mRNA"/>
</dbReference>
<dbReference type="EMBL" id="BC006624">
    <property type="protein sequence ID" value="AAH06624.1"/>
    <property type="molecule type" value="mRNA"/>
</dbReference>
<dbReference type="CCDS" id="CCDS17477.1"/>
<dbReference type="RefSeq" id="NP_058595.2">
    <property type="nucleotide sequence ID" value="NM_016899.4"/>
</dbReference>
<dbReference type="SMR" id="Q9WTL2"/>
<dbReference type="BioGRID" id="207497">
    <property type="interactions" value="1"/>
</dbReference>
<dbReference type="FunCoup" id="Q9WTL2">
    <property type="interactions" value="231"/>
</dbReference>
<dbReference type="IntAct" id="Q9WTL2">
    <property type="interactions" value="3"/>
</dbReference>
<dbReference type="MINT" id="Q9WTL2"/>
<dbReference type="STRING" id="10090.ENSMUSP00000008745"/>
<dbReference type="iPTMnet" id="Q9WTL2"/>
<dbReference type="PhosphoSitePlus" id="Q9WTL2"/>
<dbReference type="jPOST" id="Q9WTL2"/>
<dbReference type="PaxDb" id="10090-ENSMUSP00000008745"/>
<dbReference type="ProteomicsDB" id="300222"/>
<dbReference type="Antibodypedia" id="1660">
    <property type="antibodies" value="295 antibodies from 30 providers"/>
</dbReference>
<dbReference type="DNASU" id="53868"/>
<dbReference type="Ensembl" id="ENSMUST00000008745.13">
    <property type="protein sequence ID" value="ENSMUSP00000008745.7"/>
    <property type="gene ID" value="ENSMUSG00000008601.13"/>
</dbReference>
<dbReference type="GeneID" id="53868"/>
<dbReference type="KEGG" id="mmu:53868"/>
<dbReference type="UCSC" id="uc008pvn.1">
    <property type="organism name" value="mouse"/>
</dbReference>
<dbReference type="AGR" id="MGI:1858203"/>
<dbReference type="CTD" id="57111"/>
<dbReference type="MGI" id="MGI:1858203">
    <property type="gene designation" value="Rab25"/>
</dbReference>
<dbReference type="VEuPathDB" id="HostDB:ENSMUSG00000008601"/>
<dbReference type="eggNOG" id="KOG0087">
    <property type="taxonomic scope" value="Eukaryota"/>
</dbReference>
<dbReference type="GeneTree" id="ENSGT00940000158230"/>
<dbReference type="HOGENOM" id="CLU_041217_23_1_1"/>
<dbReference type="InParanoid" id="Q9WTL2"/>
<dbReference type="OMA" id="KRACCIN"/>
<dbReference type="OrthoDB" id="9989112at2759"/>
<dbReference type="PhylomeDB" id="Q9WTL2"/>
<dbReference type="TreeFam" id="TF300099"/>
<dbReference type="Reactome" id="R-MMU-8873719">
    <property type="pathway name" value="RAB geranylgeranylation"/>
</dbReference>
<dbReference type="BioGRID-ORCS" id="53868">
    <property type="hits" value="2 hits in 76 CRISPR screens"/>
</dbReference>
<dbReference type="ChiTaRS" id="Lamtor2">
    <property type="organism name" value="mouse"/>
</dbReference>
<dbReference type="PRO" id="PR:Q9WTL2"/>
<dbReference type="Proteomes" id="UP000000589">
    <property type="component" value="Chromosome 3"/>
</dbReference>
<dbReference type="RNAct" id="Q9WTL2">
    <property type="molecule type" value="protein"/>
</dbReference>
<dbReference type="Bgee" id="ENSMUSG00000008601">
    <property type="expression patterns" value="Expressed in urinary bladder urothelium and 141 other cell types or tissues"/>
</dbReference>
<dbReference type="ExpressionAtlas" id="Q9WTL2">
    <property type="expression patterns" value="baseline and differential"/>
</dbReference>
<dbReference type="GO" id="GO:0031410">
    <property type="term" value="C:cytoplasmic vesicle"/>
    <property type="evidence" value="ECO:0000250"/>
    <property type="project" value="UniProtKB"/>
</dbReference>
<dbReference type="GO" id="GO:0031143">
    <property type="term" value="C:pseudopodium"/>
    <property type="evidence" value="ECO:0000250"/>
    <property type="project" value="UniProtKB"/>
</dbReference>
<dbReference type="GO" id="GO:0031260">
    <property type="term" value="C:pseudopodium membrane"/>
    <property type="evidence" value="ECO:0007669"/>
    <property type="project" value="UniProtKB-SubCell"/>
</dbReference>
<dbReference type="GO" id="GO:0003925">
    <property type="term" value="F:G protein activity"/>
    <property type="evidence" value="ECO:0000250"/>
    <property type="project" value="UniProtKB"/>
</dbReference>
<dbReference type="GO" id="GO:0005525">
    <property type="term" value="F:GTP binding"/>
    <property type="evidence" value="ECO:0007669"/>
    <property type="project" value="UniProtKB-KW"/>
</dbReference>
<dbReference type="GO" id="GO:0031489">
    <property type="term" value="F:myosin V binding"/>
    <property type="evidence" value="ECO:0007669"/>
    <property type="project" value="Ensembl"/>
</dbReference>
<dbReference type="GO" id="GO:0003382">
    <property type="term" value="P:epithelial cell morphogenesis"/>
    <property type="evidence" value="ECO:0000315"/>
    <property type="project" value="UniProtKB"/>
</dbReference>
<dbReference type="GO" id="GO:0008284">
    <property type="term" value="P:positive regulation of cell population proliferation"/>
    <property type="evidence" value="ECO:0000250"/>
    <property type="project" value="UniProtKB"/>
</dbReference>
<dbReference type="GO" id="GO:0010634">
    <property type="term" value="P:positive regulation of epithelial cell migration"/>
    <property type="evidence" value="ECO:0007669"/>
    <property type="project" value="Ensembl"/>
</dbReference>
<dbReference type="GO" id="GO:0015031">
    <property type="term" value="P:protein transport"/>
    <property type="evidence" value="ECO:0007669"/>
    <property type="project" value="UniProtKB-KW"/>
</dbReference>
<dbReference type="GO" id="GO:0031268">
    <property type="term" value="P:pseudopodium organization"/>
    <property type="evidence" value="ECO:0000250"/>
    <property type="project" value="UniProtKB"/>
</dbReference>
<dbReference type="GO" id="GO:0060627">
    <property type="term" value="P:regulation of vesicle-mediated transport"/>
    <property type="evidence" value="ECO:0007669"/>
    <property type="project" value="Ensembl"/>
</dbReference>
<dbReference type="CDD" id="cd01868">
    <property type="entry name" value="Rab11_like"/>
    <property type="match status" value="1"/>
</dbReference>
<dbReference type="FunFam" id="3.40.50.300:FF:000067">
    <property type="entry name" value="ras-related protein RABA1f"/>
    <property type="match status" value="1"/>
</dbReference>
<dbReference type="Gene3D" id="3.40.50.300">
    <property type="entry name" value="P-loop containing nucleotide triphosphate hydrolases"/>
    <property type="match status" value="1"/>
</dbReference>
<dbReference type="InterPro" id="IPR027417">
    <property type="entry name" value="P-loop_NTPase"/>
</dbReference>
<dbReference type="InterPro" id="IPR050209">
    <property type="entry name" value="Rab_GTPases_membrane_traffic"/>
</dbReference>
<dbReference type="InterPro" id="IPR005225">
    <property type="entry name" value="Small_GTP-bd"/>
</dbReference>
<dbReference type="InterPro" id="IPR001806">
    <property type="entry name" value="Small_GTPase"/>
</dbReference>
<dbReference type="NCBIfam" id="TIGR00231">
    <property type="entry name" value="small_GTP"/>
    <property type="match status" value="1"/>
</dbReference>
<dbReference type="PANTHER" id="PTHR47979">
    <property type="entry name" value="DRAB11-RELATED"/>
    <property type="match status" value="1"/>
</dbReference>
<dbReference type="Pfam" id="PF00071">
    <property type="entry name" value="Ras"/>
    <property type="match status" value="1"/>
</dbReference>
<dbReference type="PRINTS" id="PR00449">
    <property type="entry name" value="RASTRNSFRMNG"/>
</dbReference>
<dbReference type="SMART" id="SM00175">
    <property type="entry name" value="RAB"/>
    <property type="match status" value="1"/>
</dbReference>
<dbReference type="SMART" id="SM00176">
    <property type="entry name" value="RAN"/>
    <property type="match status" value="1"/>
</dbReference>
<dbReference type="SMART" id="SM00173">
    <property type="entry name" value="RAS"/>
    <property type="match status" value="1"/>
</dbReference>
<dbReference type="SMART" id="SM00174">
    <property type="entry name" value="RHO"/>
    <property type="match status" value="1"/>
</dbReference>
<dbReference type="SUPFAM" id="SSF52540">
    <property type="entry name" value="P-loop containing nucleoside triphosphate hydrolases"/>
    <property type="match status" value="1"/>
</dbReference>
<dbReference type="PROSITE" id="PS51419">
    <property type="entry name" value="RAB"/>
    <property type="match status" value="1"/>
</dbReference>
<protein>
    <recommendedName>
        <fullName>Ras-related protein Rab-25</fullName>
        <ecNumber evidence="3">3.6.5.2</ecNumber>
    </recommendedName>
</protein>
<proteinExistence type="evidence at protein level"/>
<sequence length="213" mass="23473">MGNRTDEDYNFVFKVVLIGESGVGKTNLLSRFTRNEFSHDSRTTIGVEFSTRTVMLGTAAVKAQIWDTAGLERYRAITSAYYRGAVGALLVFDLTKHQTYAVVERWLKELYDHAEATIVVMLVGNKSDLSQAREVPTEEACMFAENNGLLFLETSALDSTNVELAFQTVLKEIFAKVSKQKQNSTRTSAITLGNAQAGQDPGPGEKRACCISL</sequence>
<feature type="chain" id="PRO_0000121216" description="Ras-related protein Rab-25">
    <location>
        <begin position="1"/>
        <end position="210"/>
    </location>
</feature>
<feature type="propeptide" id="PRO_0000370822" description="Removed in mature form" evidence="7">
    <location>
        <begin position="211"/>
        <end position="213"/>
    </location>
</feature>
<feature type="short sequence motif" description="Switch 1" evidence="6">
    <location>
        <begin position="35"/>
        <end position="49"/>
    </location>
</feature>
<feature type="short sequence motif" description="Switch 2" evidence="6">
    <location>
        <begin position="67"/>
        <end position="84"/>
    </location>
</feature>
<feature type="binding site" evidence="4">
    <location>
        <position position="21"/>
    </location>
    <ligand>
        <name>GTP</name>
        <dbReference type="ChEBI" id="CHEBI:37565"/>
    </ligand>
</feature>
<feature type="binding site" evidence="4">
    <location>
        <position position="24"/>
    </location>
    <ligand>
        <name>GTP</name>
        <dbReference type="ChEBI" id="CHEBI:37565"/>
    </ligand>
</feature>
<feature type="binding site" evidence="4">
    <location>
        <position position="25"/>
    </location>
    <ligand>
        <name>GTP</name>
        <dbReference type="ChEBI" id="CHEBI:37565"/>
    </ligand>
</feature>
<feature type="binding site" evidence="4">
    <location>
        <position position="26"/>
    </location>
    <ligand>
        <name>GTP</name>
        <dbReference type="ChEBI" id="CHEBI:37565"/>
    </ligand>
</feature>
<feature type="binding site" evidence="4">
    <location>
        <position position="26"/>
    </location>
    <ligand>
        <name>Mg(2+)</name>
        <dbReference type="ChEBI" id="CHEBI:18420"/>
    </ligand>
</feature>
<feature type="binding site" evidence="4">
    <location>
        <position position="27"/>
    </location>
    <ligand>
        <name>GTP</name>
        <dbReference type="ChEBI" id="CHEBI:37565"/>
    </ligand>
</feature>
<feature type="binding site" evidence="4">
    <location>
        <position position="38"/>
    </location>
    <ligand>
        <name>GTP</name>
        <dbReference type="ChEBI" id="CHEBI:37565"/>
    </ligand>
</feature>
<feature type="binding site" evidence="4">
    <location>
        <position position="39"/>
    </location>
    <ligand>
        <name>GTP</name>
        <dbReference type="ChEBI" id="CHEBI:37565"/>
    </ligand>
</feature>
<feature type="binding site" evidence="4">
    <location>
        <position position="43"/>
    </location>
    <ligand>
        <name>GTP</name>
        <dbReference type="ChEBI" id="CHEBI:37565"/>
    </ligand>
</feature>
<feature type="binding site" evidence="4">
    <location>
        <position position="44"/>
    </location>
    <ligand>
        <name>GTP</name>
        <dbReference type="ChEBI" id="CHEBI:37565"/>
    </ligand>
</feature>
<feature type="binding site" evidence="4">
    <location>
        <position position="44"/>
    </location>
    <ligand>
        <name>Mg(2+)</name>
        <dbReference type="ChEBI" id="CHEBI:18420"/>
    </ligand>
</feature>
<feature type="binding site" evidence="4">
    <location>
        <position position="67"/>
    </location>
    <ligand>
        <name>Mg(2+)</name>
        <dbReference type="ChEBI" id="CHEBI:18420"/>
    </ligand>
</feature>
<feature type="binding site" evidence="4">
    <location>
        <position position="70"/>
    </location>
    <ligand>
        <name>GTP</name>
        <dbReference type="ChEBI" id="CHEBI:37565"/>
    </ligand>
</feature>
<feature type="binding site" evidence="4">
    <location>
        <position position="125"/>
    </location>
    <ligand>
        <name>GTP</name>
        <dbReference type="ChEBI" id="CHEBI:37565"/>
    </ligand>
</feature>
<feature type="binding site" evidence="4">
    <location>
        <position position="126"/>
    </location>
    <ligand>
        <name>GTP</name>
        <dbReference type="ChEBI" id="CHEBI:37565"/>
    </ligand>
</feature>
<feature type="binding site" evidence="4">
    <location>
        <position position="128"/>
    </location>
    <ligand>
        <name>GTP</name>
        <dbReference type="ChEBI" id="CHEBI:37565"/>
    </ligand>
</feature>
<feature type="binding site" evidence="4">
    <location>
        <position position="156"/>
    </location>
    <ligand>
        <name>GTP</name>
        <dbReference type="ChEBI" id="CHEBI:37565"/>
    </ligand>
</feature>
<feature type="binding site" evidence="4">
    <location>
        <position position="157"/>
    </location>
    <ligand>
        <name>GTP</name>
        <dbReference type="ChEBI" id="CHEBI:37565"/>
    </ligand>
</feature>
<feature type="modified residue" description="Cysteine methyl ester" evidence="7">
    <location>
        <position position="210"/>
    </location>
</feature>
<feature type="lipid moiety-binding region" description="S-geranylgeranyl cysteine" evidence="1">
    <location>
        <position position="209"/>
    </location>
</feature>
<feature type="lipid moiety-binding region" description="S-geranylgeranyl cysteine" evidence="1">
    <location>
        <position position="210"/>
    </location>
</feature>
<feature type="sequence conflict" description="In Ref. 1; AAD39911/AAD39912." evidence="9" ref="1">
    <original>P</original>
    <variation>L</variation>
    <location>
        <position position="203"/>
    </location>
</feature>
<name>RAB25_MOUSE</name>